<reference key="1">
    <citation type="submission" date="2008-05" db="EMBL/GenBank/DDBJ databases">
        <title>Complete sequence of Rhodopseudomonas palustris TIE-1.</title>
        <authorList>
            <consortium name="US DOE Joint Genome Institute"/>
            <person name="Lucas S."/>
            <person name="Copeland A."/>
            <person name="Lapidus A."/>
            <person name="Glavina del Rio T."/>
            <person name="Dalin E."/>
            <person name="Tice H."/>
            <person name="Pitluck S."/>
            <person name="Chain P."/>
            <person name="Malfatti S."/>
            <person name="Shin M."/>
            <person name="Vergez L."/>
            <person name="Lang D."/>
            <person name="Schmutz J."/>
            <person name="Larimer F."/>
            <person name="Land M."/>
            <person name="Hauser L."/>
            <person name="Kyrpides N."/>
            <person name="Mikhailova N."/>
            <person name="Emerson D."/>
            <person name="Newman D.K."/>
            <person name="Roden E."/>
            <person name="Richardson P."/>
        </authorList>
    </citation>
    <scope>NUCLEOTIDE SEQUENCE [LARGE SCALE GENOMIC DNA]</scope>
    <source>
        <strain>TIE-1</strain>
    </source>
</reference>
<name>METE_RHOPT</name>
<proteinExistence type="inferred from homology"/>
<evidence type="ECO:0000255" key="1">
    <source>
        <dbReference type="HAMAP-Rule" id="MF_00172"/>
    </source>
</evidence>
<keyword id="KW-0028">Amino-acid biosynthesis</keyword>
<keyword id="KW-0479">Metal-binding</keyword>
<keyword id="KW-0486">Methionine biosynthesis</keyword>
<keyword id="KW-0489">Methyltransferase</keyword>
<keyword id="KW-0677">Repeat</keyword>
<keyword id="KW-0808">Transferase</keyword>
<keyword id="KW-0862">Zinc</keyword>
<sequence>MSSHTVSTSLAVATLGTPRIGPRRELKSALESFWAGKSTEADLLKVAAALRAANWARQSARGVSVIPSNDFSLYDQVLDTSVMVGAIPEIYGWRGGPVSLATYFAMARGTQAEIAGHGCANGHHHGDSTPQGVPAQEMTKWFDTNYHYMVPEFSAGQSFQLASLKPLEEYREAKALGYDTRPVLLGPVTYLKLGKSADARLDVLSLLPKLVPVYIEILGRLAAAGAKWVQLDEPALVLDLDDRERLAFRDAYGQIARELPHLDIMLTTYFGGLGDNLDTALALPIAGLHLDLVRAPKQINAVIAKGPKDLVLSLGVVDGRNIWRADLPDLLDRVEPIVQQRGAERVQLAPSCSLLHVPVDLELETGLDPDLKSWLSFSLQKMGELSTLSGALSGDRAAVQDQLSASAKAAATRRKSPKVHDMAVSSRAAAVTPAMTQRNSGFAARATLQHQRLQLPAFPTTTIGSFPQTAQIRQARAAHAKGAISDADYNTFLRGETARAIQWQEKVGLDVLVHGEFERNDMVQYFGEQLSGFAFTKEGWVQSYGSRCVRPPILFGDVSRPKPMTVGWWKYAQSLTGRPMKGMLTGPVTILNWSFVRDDVPRSTACLQIALAIRDEVGDLEQAGATMIQIDEAALREGLPLRRSEWKGYLDWAVECFRLCSSGVKDETQIHTHMCYSEFNDIIDAIAAMDADVISIETSRSKMELLDAFKTYKYPNEIGPGVYDIHSPRVPSVEEMTTLLQLARQRLSDGQLWVNPDCGLKTRGWDEVQGALVNMVEAARQIRQVSAG</sequence>
<organism>
    <name type="scientific">Rhodopseudomonas palustris (strain TIE-1)</name>
    <dbReference type="NCBI Taxonomy" id="395960"/>
    <lineage>
        <taxon>Bacteria</taxon>
        <taxon>Pseudomonadati</taxon>
        <taxon>Pseudomonadota</taxon>
        <taxon>Alphaproteobacteria</taxon>
        <taxon>Hyphomicrobiales</taxon>
        <taxon>Nitrobacteraceae</taxon>
        <taxon>Rhodopseudomonas</taxon>
    </lineage>
</organism>
<protein>
    <recommendedName>
        <fullName evidence="1">5-methyltetrahydropteroyltriglutamate--homocysteine methyltransferase</fullName>
        <ecNumber evidence="1">2.1.1.14</ecNumber>
    </recommendedName>
    <alternativeName>
        <fullName evidence="1">Cobalamin-independent methionine synthase</fullName>
    </alternativeName>
    <alternativeName>
        <fullName evidence="1">Methionine synthase, vitamin-B12 independent isozyme</fullName>
    </alternativeName>
</protein>
<feature type="chain" id="PRO_1000097835" description="5-methyltetrahydropteroyltriglutamate--homocysteine methyltransferase">
    <location>
        <begin position="1"/>
        <end position="788"/>
    </location>
</feature>
<feature type="active site" description="Proton donor" evidence="1">
    <location>
        <position position="726"/>
    </location>
</feature>
<feature type="binding site" evidence="1">
    <location>
        <begin position="24"/>
        <end position="27"/>
    </location>
    <ligand>
        <name>5-methyltetrahydropteroyltri-L-glutamate</name>
        <dbReference type="ChEBI" id="CHEBI:58207"/>
    </ligand>
</feature>
<feature type="binding site" evidence="1">
    <location>
        <position position="140"/>
    </location>
    <ligand>
        <name>5-methyltetrahydropteroyltri-L-glutamate</name>
        <dbReference type="ChEBI" id="CHEBI:58207"/>
    </ligand>
</feature>
<feature type="binding site" evidence="1">
    <location>
        <begin position="463"/>
        <end position="465"/>
    </location>
    <ligand>
        <name>L-homocysteine</name>
        <dbReference type="ChEBI" id="CHEBI:58199"/>
    </ligand>
</feature>
<feature type="binding site" evidence="1">
    <location>
        <begin position="463"/>
        <end position="465"/>
    </location>
    <ligand>
        <name>L-methionine</name>
        <dbReference type="ChEBI" id="CHEBI:57844"/>
    </ligand>
</feature>
<feature type="binding site" evidence="1">
    <location>
        <position position="516"/>
    </location>
    <ligand>
        <name>L-homocysteine</name>
        <dbReference type="ChEBI" id="CHEBI:58199"/>
    </ligand>
</feature>
<feature type="binding site" evidence="1">
    <location>
        <position position="516"/>
    </location>
    <ligand>
        <name>L-methionine</name>
        <dbReference type="ChEBI" id="CHEBI:57844"/>
    </ligand>
</feature>
<feature type="binding site" evidence="1">
    <location>
        <begin position="547"/>
        <end position="548"/>
    </location>
    <ligand>
        <name>5-methyltetrahydropteroyltri-L-glutamate</name>
        <dbReference type="ChEBI" id="CHEBI:58207"/>
    </ligand>
</feature>
<feature type="binding site" evidence="1">
    <location>
        <position position="593"/>
    </location>
    <ligand>
        <name>5-methyltetrahydropteroyltri-L-glutamate</name>
        <dbReference type="ChEBI" id="CHEBI:58207"/>
    </ligand>
</feature>
<feature type="binding site" evidence="1">
    <location>
        <position position="631"/>
    </location>
    <ligand>
        <name>L-homocysteine</name>
        <dbReference type="ChEBI" id="CHEBI:58199"/>
    </ligand>
</feature>
<feature type="binding site" evidence="1">
    <location>
        <position position="631"/>
    </location>
    <ligand>
        <name>L-methionine</name>
        <dbReference type="ChEBI" id="CHEBI:57844"/>
    </ligand>
</feature>
<feature type="binding site" evidence="1">
    <location>
        <position position="637"/>
    </location>
    <ligand>
        <name>5-methyltetrahydropteroyltri-L-glutamate</name>
        <dbReference type="ChEBI" id="CHEBI:58207"/>
    </ligand>
</feature>
<feature type="binding site" evidence="1">
    <location>
        <position position="673"/>
    </location>
    <ligand>
        <name>Zn(2+)</name>
        <dbReference type="ChEBI" id="CHEBI:29105"/>
        <note>catalytic</note>
    </ligand>
</feature>
<feature type="binding site" evidence="1">
    <location>
        <position position="675"/>
    </location>
    <ligand>
        <name>Zn(2+)</name>
        <dbReference type="ChEBI" id="CHEBI:29105"/>
        <note>catalytic</note>
    </ligand>
</feature>
<feature type="binding site" evidence="1">
    <location>
        <position position="697"/>
    </location>
    <ligand>
        <name>Zn(2+)</name>
        <dbReference type="ChEBI" id="CHEBI:29105"/>
        <note>catalytic</note>
    </ligand>
</feature>
<feature type="binding site" evidence="1">
    <location>
        <position position="758"/>
    </location>
    <ligand>
        <name>Zn(2+)</name>
        <dbReference type="ChEBI" id="CHEBI:29105"/>
        <note>catalytic</note>
    </ligand>
</feature>
<gene>
    <name evidence="1" type="primary">metE</name>
    <name type="ordered locus">Rpal_2650</name>
</gene>
<dbReference type="EC" id="2.1.1.14" evidence="1"/>
<dbReference type="EMBL" id="CP001096">
    <property type="protein sequence ID" value="ACF01161.1"/>
    <property type="molecule type" value="Genomic_DNA"/>
</dbReference>
<dbReference type="RefSeq" id="WP_012495876.1">
    <property type="nucleotide sequence ID" value="NC_011004.1"/>
</dbReference>
<dbReference type="SMR" id="B3QGC4"/>
<dbReference type="KEGG" id="rpt:Rpal_2650"/>
<dbReference type="HOGENOM" id="CLU_013175_0_0_5"/>
<dbReference type="OrthoDB" id="244285at2"/>
<dbReference type="UniPathway" id="UPA00051">
    <property type="reaction ID" value="UER00082"/>
</dbReference>
<dbReference type="Proteomes" id="UP000001725">
    <property type="component" value="Chromosome"/>
</dbReference>
<dbReference type="GO" id="GO:0003871">
    <property type="term" value="F:5-methyltetrahydropteroyltriglutamate-homocysteine S-methyltransferase activity"/>
    <property type="evidence" value="ECO:0007669"/>
    <property type="project" value="UniProtKB-UniRule"/>
</dbReference>
<dbReference type="GO" id="GO:0008270">
    <property type="term" value="F:zinc ion binding"/>
    <property type="evidence" value="ECO:0007669"/>
    <property type="project" value="InterPro"/>
</dbReference>
<dbReference type="GO" id="GO:0009086">
    <property type="term" value="P:methionine biosynthetic process"/>
    <property type="evidence" value="ECO:0007669"/>
    <property type="project" value="UniProtKB-UniRule"/>
</dbReference>
<dbReference type="GO" id="GO:0032259">
    <property type="term" value="P:methylation"/>
    <property type="evidence" value="ECO:0007669"/>
    <property type="project" value="UniProtKB-KW"/>
</dbReference>
<dbReference type="CDD" id="cd03311">
    <property type="entry name" value="CIMS_C_terminal_like"/>
    <property type="match status" value="1"/>
</dbReference>
<dbReference type="CDD" id="cd03312">
    <property type="entry name" value="CIMS_N_terminal_like"/>
    <property type="match status" value="1"/>
</dbReference>
<dbReference type="FunFam" id="3.20.20.210:FF:000002">
    <property type="entry name" value="5-methyltetrahydropteroyltriglutamate--homocysteine methyltransferase"/>
    <property type="match status" value="1"/>
</dbReference>
<dbReference type="FunFam" id="3.20.20.210:FF:000003">
    <property type="entry name" value="5-methyltetrahydropteroyltriglutamate--homocysteine methyltransferase"/>
    <property type="match status" value="1"/>
</dbReference>
<dbReference type="Gene3D" id="3.20.20.210">
    <property type="match status" value="2"/>
</dbReference>
<dbReference type="HAMAP" id="MF_00172">
    <property type="entry name" value="Meth_synth"/>
    <property type="match status" value="1"/>
</dbReference>
<dbReference type="InterPro" id="IPR013215">
    <property type="entry name" value="Cbl-indep_Met_Synth_N"/>
</dbReference>
<dbReference type="InterPro" id="IPR006276">
    <property type="entry name" value="Cobalamin-indep_Met_synthase"/>
</dbReference>
<dbReference type="InterPro" id="IPR002629">
    <property type="entry name" value="Met_Synth_C/arc"/>
</dbReference>
<dbReference type="InterPro" id="IPR038071">
    <property type="entry name" value="UROD/MetE-like_sf"/>
</dbReference>
<dbReference type="NCBIfam" id="TIGR01371">
    <property type="entry name" value="met_syn_B12ind"/>
    <property type="match status" value="1"/>
</dbReference>
<dbReference type="NCBIfam" id="NF003556">
    <property type="entry name" value="PRK05222.1"/>
    <property type="match status" value="1"/>
</dbReference>
<dbReference type="PANTHER" id="PTHR30519">
    <property type="entry name" value="5-METHYLTETRAHYDROPTEROYLTRIGLUTAMATE--HOMOCYSTEINE METHYLTRANSFERASE"/>
    <property type="match status" value="1"/>
</dbReference>
<dbReference type="Pfam" id="PF08267">
    <property type="entry name" value="Meth_synt_1"/>
    <property type="match status" value="1"/>
</dbReference>
<dbReference type="Pfam" id="PF01717">
    <property type="entry name" value="Meth_synt_2"/>
    <property type="match status" value="1"/>
</dbReference>
<dbReference type="PIRSF" id="PIRSF000382">
    <property type="entry name" value="MeTrfase_B12_ind"/>
    <property type="match status" value="1"/>
</dbReference>
<dbReference type="SUPFAM" id="SSF51726">
    <property type="entry name" value="UROD/MetE-like"/>
    <property type="match status" value="2"/>
</dbReference>
<comment type="function">
    <text evidence="1">Catalyzes the transfer of a methyl group from 5-methyltetrahydrofolate to homocysteine resulting in methionine formation.</text>
</comment>
<comment type="catalytic activity">
    <reaction evidence="1">
        <text>5-methyltetrahydropteroyltri-L-glutamate + L-homocysteine = tetrahydropteroyltri-L-glutamate + L-methionine</text>
        <dbReference type="Rhea" id="RHEA:21196"/>
        <dbReference type="ChEBI" id="CHEBI:57844"/>
        <dbReference type="ChEBI" id="CHEBI:58140"/>
        <dbReference type="ChEBI" id="CHEBI:58199"/>
        <dbReference type="ChEBI" id="CHEBI:58207"/>
        <dbReference type="EC" id="2.1.1.14"/>
    </reaction>
</comment>
<comment type="cofactor">
    <cofactor evidence="1">
        <name>Zn(2+)</name>
        <dbReference type="ChEBI" id="CHEBI:29105"/>
    </cofactor>
    <text evidence="1">Binds 1 zinc ion per subunit.</text>
</comment>
<comment type="pathway">
    <text evidence="1">Amino-acid biosynthesis; L-methionine biosynthesis via de novo pathway; L-methionine from L-homocysteine (MetE route): step 1/1.</text>
</comment>
<comment type="similarity">
    <text evidence="1">Belongs to the vitamin-B12 independent methionine synthase family.</text>
</comment>
<accession>B3QGC4</accession>